<accession>A9BEK7</accession>
<protein>
    <recommendedName>
        <fullName evidence="1">Photosystem II reaction center protein Y</fullName>
    </recommendedName>
</protein>
<keyword id="KW-0472">Membrane</keyword>
<keyword id="KW-0602">Photosynthesis</keyword>
<keyword id="KW-0604">Photosystem II</keyword>
<keyword id="KW-1185">Reference proteome</keyword>
<keyword id="KW-0793">Thylakoid</keyword>
<keyword id="KW-0812">Transmembrane</keyword>
<keyword id="KW-1133">Transmembrane helix</keyword>
<sequence length="41" mass="4711">MLNLIVVVLPILAAVTWVVFNIQKPAREQLARQFDENNKAF</sequence>
<name>PSBY_PROM4</name>
<evidence type="ECO:0000255" key="1">
    <source>
        <dbReference type="HAMAP-Rule" id="MF_00717"/>
    </source>
</evidence>
<evidence type="ECO:0000305" key="2"/>
<feature type="chain" id="PRO_1000192886" description="Photosystem II reaction center protein Y">
    <location>
        <begin position="1"/>
        <end position="41"/>
    </location>
</feature>
<feature type="transmembrane region" description="Helical" evidence="1">
    <location>
        <begin position="4"/>
        <end position="22"/>
    </location>
</feature>
<reference key="1">
    <citation type="journal article" date="2007" name="PLoS Genet.">
        <title>Patterns and implications of gene gain and loss in the evolution of Prochlorococcus.</title>
        <authorList>
            <person name="Kettler G.C."/>
            <person name="Martiny A.C."/>
            <person name="Huang K."/>
            <person name="Zucker J."/>
            <person name="Coleman M.L."/>
            <person name="Rodrigue S."/>
            <person name="Chen F."/>
            <person name="Lapidus A."/>
            <person name="Ferriera S."/>
            <person name="Johnson J."/>
            <person name="Steglich C."/>
            <person name="Church G.M."/>
            <person name="Richardson P."/>
            <person name="Chisholm S.W."/>
        </authorList>
    </citation>
    <scope>NUCLEOTIDE SEQUENCE [LARGE SCALE GENOMIC DNA]</scope>
    <source>
        <strain>MIT 9211</strain>
    </source>
</reference>
<comment type="function">
    <text evidence="1">Loosely associated component of the core of photosystem II (PSII), it is not always seen in crystals. PSII is a light-driven water plastoquinone oxidoreductase, using light energy to abstract electrons from H(2)O, generating a proton gradient subsequently used for ATP formation.</text>
</comment>
<comment type="subunit">
    <text evidence="2">PSII is composed of 1 copy each of membrane proteins PsbA, PsbB, PsbC, PsbD, PsbE, PsbF, PsbH, PsbI, PsbJ, PsbK, PsbL, PsbM, PsbT, PsbX, PsbY, Psb30/Ycf12, peripheral proteins PsbO, CyanoQ (PsbQ), PsbU, PsbV and a large number of cofactors. It forms dimeric complexes.</text>
</comment>
<comment type="subcellular location">
    <subcellularLocation>
        <location evidence="1">Cellular thylakoid membrane</location>
        <topology evidence="1">Single-pass membrane protein</topology>
    </subcellularLocation>
</comment>
<comment type="similarity">
    <text evidence="1">Belongs to the PsbY family.</text>
</comment>
<organism>
    <name type="scientific">Prochlorococcus marinus (strain MIT 9211)</name>
    <dbReference type="NCBI Taxonomy" id="93059"/>
    <lineage>
        <taxon>Bacteria</taxon>
        <taxon>Bacillati</taxon>
        <taxon>Cyanobacteriota</taxon>
        <taxon>Cyanophyceae</taxon>
        <taxon>Synechococcales</taxon>
        <taxon>Prochlorococcaceae</taxon>
        <taxon>Prochlorococcus</taxon>
    </lineage>
</organism>
<dbReference type="EMBL" id="CP000878">
    <property type="protein sequence ID" value="ABX08517.1"/>
    <property type="molecule type" value="Genomic_DNA"/>
</dbReference>
<dbReference type="RefSeq" id="WP_012195139.1">
    <property type="nucleotide sequence ID" value="NC_009976.1"/>
</dbReference>
<dbReference type="SMR" id="A9BEK7"/>
<dbReference type="STRING" id="93059.P9211_05861"/>
<dbReference type="KEGG" id="pmj:P9211_05861"/>
<dbReference type="eggNOG" id="ENOG503088I">
    <property type="taxonomic scope" value="Bacteria"/>
</dbReference>
<dbReference type="HOGENOM" id="CLU_218393_0_0_3"/>
<dbReference type="Proteomes" id="UP000000788">
    <property type="component" value="Chromosome"/>
</dbReference>
<dbReference type="GO" id="GO:0009523">
    <property type="term" value="C:photosystem II"/>
    <property type="evidence" value="ECO:0007669"/>
    <property type="project" value="UniProtKB-KW"/>
</dbReference>
<dbReference type="GO" id="GO:0031676">
    <property type="term" value="C:plasma membrane-derived thylakoid membrane"/>
    <property type="evidence" value="ECO:0007669"/>
    <property type="project" value="UniProtKB-SubCell"/>
</dbReference>
<dbReference type="GO" id="GO:0030145">
    <property type="term" value="F:manganese ion binding"/>
    <property type="evidence" value="ECO:0007669"/>
    <property type="project" value="InterPro"/>
</dbReference>
<dbReference type="GO" id="GO:0015979">
    <property type="term" value="P:photosynthesis"/>
    <property type="evidence" value="ECO:0007669"/>
    <property type="project" value="UniProtKB-UniRule"/>
</dbReference>
<dbReference type="HAMAP" id="MF_00717">
    <property type="entry name" value="PSII_PsbY"/>
    <property type="match status" value="1"/>
</dbReference>
<dbReference type="InterPro" id="IPR009388">
    <property type="entry name" value="PSII_PsbY"/>
</dbReference>
<dbReference type="NCBIfam" id="NF009711">
    <property type="entry name" value="PRK13240.1"/>
    <property type="match status" value="1"/>
</dbReference>
<dbReference type="Pfam" id="PF06298">
    <property type="entry name" value="PsbY"/>
    <property type="match status" value="1"/>
</dbReference>
<gene>
    <name evidence="1" type="primary">psbY</name>
    <name type="ordered locus">P9211_05861</name>
</gene>
<proteinExistence type="inferred from homology"/>